<proteinExistence type="evidence at protein level"/>
<keyword id="KW-0002">3D-structure</keyword>
<keyword id="KW-0010">Activator</keyword>
<keyword id="KW-0238">DNA-binding</keyword>
<keyword id="KW-0479">Metal-binding</keyword>
<keyword id="KW-0534">Nitrate assimilation</keyword>
<keyword id="KW-0539">Nucleus</keyword>
<keyword id="KW-1185">Reference proteome</keyword>
<keyword id="KW-0804">Transcription</keyword>
<keyword id="KW-0805">Transcription regulation</keyword>
<keyword id="KW-0862">Zinc</keyword>
<keyword id="KW-0863">Zinc-finger</keyword>
<sequence length="876" mass="94196">MSGLTLGGGSGRVRPTQAAAAFPTSHDFADPDRSSVARNANRPSRRFAAPPQLSDDFSLESPTDSAQVHDNLLQDALFPEWKANSPRGVDSPDEMQKKDPLATQIWKLYSRTKAQLPNQERMENLTWRMMALSLRRQERERAQQQARASSQKSPVPGMSGIAQLRLSDRVSNTPTTTADTVSDAMNLDDFIIPFSPSDHPSPSTTKASEATTGAIPIKARRDQSASEATPVPASFPHPAQDQRRESEFGYVPRRVRKTSIDERQFFNLQIPSRKRPAESSPHVPPVSTSMLAHDPDFSHAVPEYTLDTSHGLSLQNQMNAQQLANAQNHTSPNMAFALDTFNLGDDPILPSAGPYQQQFTFSPSESPMTSGNPFANLYAQTPIASSLNSTDFFSPPPSGYQSTASTPQPAYDGEHSKYFDMPVDARSQRRVVPAYITQRSSNLSASLQPRYMYNQGGSSQDITQQNAHMGAQSSSMQSPGFSIPQHVDPTQVLNPNEFNGNHAAMFSFGADSDVEDDDGNQFSAGGLAMPAEFGDDSISDMNSNMAWETSYPNSFQSLPAFAAQHRKHVTIGSADMMDTPSEWNQGGSLGRTHESAASVSEVRNRDQDPRRQKIARTSSTPNTAQLLRQSMQNQSSHTSPNTPPESGLNSAAPSRPASPGGTKNGEQNGPTTCTNCFTQTTPLWRRNPEGQPLCNACGLFLKLHGVVRPLSLKTDVIKKRNRNSANSLAVGSSRVSKKSARKNSVQQVTPTAPTSSRAQSNTTSESPPAMPGSSGRGSGVVPIAAAPPKSSSAATTSPGTNNGCGAVQVAPKRQRRLEKASDVDMAESPSSTSSGGRSKVVPLAPAMPPAAVNPANHSIAAGQGASQEWEWLTMSL</sequence>
<gene>
    <name type="primary">areA</name>
    <name type="ORF">AN8667</name>
</gene>
<dbReference type="EMBL" id="X52491">
    <property type="protein sequence ID" value="CAA36731.1"/>
    <property type="molecule type" value="Genomic_DNA"/>
</dbReference>
<dbReference type="EMBL" id="AACD01000158">
    <property type="protein sequence ID" value="EAA60701.1"/>
    <property type="molecule type" value="Genomic_DNA"/>
</dbReference>
<dbReference type="EMBL" id="BN001303">
    <property type="protein sequence ID" value="CBF78221.1"/>
    <property type="molecule type" value="Genomic_DNA"/>
</dbReference>
<dbReference type="PIR" id="A57988">
    <property type="entry name" value="A57988"/>
</dbReference>
<dbReference type="RefSeq" id="XP_681936.1">
    <property type="nucleotide sequence ID" value="XM_676844.1"/>
</dbReference>
<dbReference type="PDB" id="2VUS">
    <property type="method" value="X-ray"/>
    <property type="resolution" value="2.60 A"/>
    <property type="chains" value="I/J/K/L/M/N/O/P=670-712"/>
</dbReference>
<dbReference type="PDB" id="2VUT">
    <property type="method" value="X-ray"/>
    <property type="resolution" value="2.30 A"/>
    <property type="chains" value="I/J/K/L/M/N/O/P=670-712"/>
</dbReference>
<dbReference type="PDB" id="2VUU">
    <property type="method" value="X-ray"/>
    <property type="resolution" value="2.80 A"/>
    <property type="chains" value="I/J/K/L/M/N/O/P=670-712"/>
</dbReference>
<dbReference type="PDB" id="4GAT">
    <property type="method" value="NMR"/>
    <property type="chains" value="A=663-727"/>
</dbReference>
<dbReference type="PDB" id="5GAT">
    <property type="method" value="NMR"/>
    <property type="chains" value="A=663-727"/>
</dbReference>
<dbReference type="PDB" id="6GAT">
    <property type="method" value="NMR"/>
    <property type="chains" value="A=663-727"/>
</dbReference>
<dbReference type="PDB" id="7GAT">
    <property type="method" value="NMR"/>
    <property type="chains" value="A=663-727"/>
</dbReference>
<dbReference type="PDBsum" id="2VUS"/>
<dbReference type="PDBsum" id="2VUT"/>
<dbReference type="PDBsum" id="2VUU"/>
<dbReference type="PDBsum" id="4GAT"/>
<dbReference type="PDBsum" id="5GAT"/>
<dbReference type="PDBsum" id="6GAT"/>
<dbReference type="PDBsum" id="7GAT"/>
<dbReference type="BMRB" id="P17429"/>
<dbReference type="SMR" id="P17429"/>
<dbReference type="STRING" id="227321.P17429"/>
<dbReference type="EnsemblFungi" id="CBF78221">
    <property type="protein sequence ID" value="CBF78221"/>
    <property type="gene ID" value="ANIA_08667"/>
</dbReference>
<dbReference type="GeneID" id="2868505"/>
<dbReference type="KEGG" id="ani:ANIA_08667"/>
<dbReference type="VEuPathDB" id="FungiDB:AN8667"/>
<dbReference type="eggNOG" id="KOG1601">
    <property type="taxonomic scope" value="Eukaryota"/>
</dbReference>
<dbReference type="HOGENOM" id="CLU_009509_0_0_1"/>
<dbReference type="InParanoid" id="P17429"/>
<dbReference type="OMA" id="WRMMAMS"/>
<dbReference type="OrthoDB" id="515401at2759"/>
<dbReference type="EvolutionaryTrace" id="P17429"/>
<dbReference type="Proteomes" id="UP000000560">
    <property type="component" value="Chromosome III"/>
</dbReference>
<dbReference type="GO" id="GO:0005634">
    <property type="term" value="C:nucleus"/>
    <property type="evidence" value="ECO:0000314"/>
    <property type="project" value="AspGD"/>
</dbReference>
<dbReference type="GO" id="GO:0000981">
    <property type="term" value="F:DNA-binding transcription factor activity, RNA polymerase II-specific"/>
    <property type="evidence" value="ECO:0000318"/>
    <property type="project" value="GO_Central"/>
</dbReference>
<dbReference type="GO" id="GO:0000978">
    <property type="term" value="F:RNA polymerase II cis-regulatory region sequence-specific DNA binding"/>
    <property type="evidence" value="ECO:0000318"/>
    <property type="project" value="GO_Central"/>
</dbReference>
<dbReference type="GO" id="GO:0043565">
    <property type="term" value="F:sequence-specific DNA binding"/>
    <property type="evidence" value="ECO:0000314"/>
    <property type="project" value="UniProtKB"/>
</dbReference>
<dbReference type="GO" id="GO:0008270">
    <property type="term" value="F:zinc ion binding"/>
    <property type="evidence" value="ECO:0007669"/>
    <property type="project" value="UniProtKB-KW"/>
</dbReference>
<dbReference type="GO" id="GO:0006338">
    <property type="term" value="P:chromatin remodeling"/>
    <property type="evidence" value="ECO:0000314"/>
    <property type="project" value="AspGD"/>
</dbReference>
<dbReference type="GO" id="GO:0000122">
    <property type="term" value="P:negative regulation of transcription by RNA polymerase II"/>
    <property type="evidence" value="ECO:0000318"/>
    <property type="project" value="GO_Central"/>
</dbReference>
<dbReference type="GO" id="GO:0042128">
    <property type="term" value="P:nitrate assimilation"/>
    <property type="evidence" value="ECO:0007669"/>
    <property type="project" value="UniProtKB-KW"/>
</dbReference>
<dbReference type="GO" id="GO:0045944">
    <property type="term" value="P:positive regulation of transcription by RNA polymerase II"/>
    <property type="evidence" value="ECO:0000318"/>
    <property type="project" value="GO_Central"/>
</dbReference>
<dbReference type="GO" id="GO:0034251">
    <property type="term" value="P:regulation of amide catabolic process"/>
    <property type="evidence" value="ECO:0000315"/>
    <property type="project" value="AspGD"/>
</dbReference>
<dbReference type="GO" id="GO:0000821">
    <property type="term" value="P:regulation of arginine metabolic process"/>
    <property type="evidence" value="ECO:0000315"/>
    <property type="project" value="AspGD"/>
</dbReference>
<dbReference type="GO" id="GO:0010468">
    <property type="term" value="P:regulation of gene expression"/>
    <property type="evidence" value="ECO:0000315"/>
    <property type="project" value="AspGD"/>
</dbReference>
<dbReference type="GO" id="GO:0006808">
    <property type="term" value="P:regulation of nitrogen utilization"/>
    <property type="evidence" value="ECO:0000315"/>
    <property type="project" value="AspGD"/>
</dbReference>
<dbReference type="CDD" id="cd00202">
    <property type="entry name" value="ZnF_GATA"/>
    <property type="match status" value="1"/>
</dbReference>
<dbReference type="FunFam" id="3.30.50.10:FF:000007">
    <property type="entry name" value="Nitrogen regulatory AreA, N-terminal"/>
    <property type="match status" value="1"/>
</dbReference>
<dbReference type="Gene3D" id="3.30.50.10">
    <property type="entry name" value="Erythroid Transcription Factor GATA-1, subunit A"/>
    <property type="match status" value="1"/>
</dbReference>
<dbReference type="InterPro" id="IPR013860">
    <property type="entry name" value="AreA_GATA"/>
</dbReference>
<dbReference type="InterPro" id="IPR011420">
    <property type="entry name" value="AreA_N"/>
</dbReference>
<dbReference type="InterPro" id="IPR039355">
    <property type="entry name" value="Transcription_factor_GATA"/>
</dbReference>
<dbReference type="InterPro" id="IPR000679">
    <property type="entry name" value="Znf_GATA"/>
</dbReference>
<dbReference type="InterPro" id="IPR013088">
    <property type="entry name" value="Znf_NHR/GATA"/>
</dbReference>
<dbReference type="PANTHER" id="PTHR10071:SF281">
    <property type="entry name" value="BOX A-BINDING FACTOR-RELATED"/>
    <property type="match status" value="1"/>
</dbReference>
<dbReference type="PANTHER" id="PTHR10071">
    <property type="entry name" value="TRANSCRIPTION FACTOR GATA FAMILY MEMBER"/>
    <property type="match status" value="1"/>
</dbReference>
<dbReference type="Pfam" id="PF07573">
    <property type="entry name" value="AreA_N"/>
    <property type="match status" value="1"/>
</dbReference>
<dbReference type="Pfam" id="PF00320">
    <property type="entry name" value="GATA"/>
    <property type="match status" value="1"/>
</dbReference>
<dbReference type="Pfam" id="PF08550">
    <property type="entry name" value="GATA_AreA"/>
    <property type="match status" value="1"/>
</dbReference>
<dbReference type="PRINTS" id="PR00619">
    <property type="entry name" value="GATAZNFINGER"/>
</dbReference>
<dbReference type="SMART" id="SM00401">
    <property type="entry name" value="ZnF_GATA"/>
    <property type="match status" value="1"/>
</dbReference>
<dbReference type="SUPFAM" id="SSF57716">
    <property type="entry name" value="Glucocorticoid receptor-like (DNA-binding domain)"/>
    <property type="match status" value="1"/>
</dbReference>
<dbReference type="PROSITE" id="PS00344">
    <property type="entry name" value="GATA_ZN_FINGER_1"/>
    <property type="match status" value="1"/>
</dbReference>
<dbReference type="PROSITE" id="PS50114">
    <property type="entry name" value="GATA_ZN_FINGER_2"/>
    <property type="match status" value="1"/>
</dbReference>
<accession>P17429</accession>
<accession>C8VA54</accession>
<accession>Q5ASR3</accession>
<protein>
    <recommendedName>
        <fullName>Nitrogen regulatory protein areA</fullName>
    </recommendedName>
</protein>
<evidence type="ECO:0000255" key="1"/>
<evidence type="ECO:0000255" key="2">
    <source>
        <dbReference type="PROSITE-ProRule" id="PRU00094"/>
    </source>
</evidence>
<evidence type="ECO:0000256" key="3">
    <source>
        <dbReference type="SAM" id="MobiDB-lite"/>
    </source>
</evidence>
<evidence type="ECO:0000269" key="4">
    <source>
    </source>
</evidence>
<evidence type="ECO:0000269" key="5">
    <source>
    </source>
</evidence>
<evidence type="ECO:0000269" key="6">
    <source>
    </source>
</evidence>
<evidence type="ECO:0000269" key="7">
    <source>
    </source>
</evidence>
<evidence type="ECO:0000269" key="8">
    <source>
    </source>
</evidence>
<evidence type="ECO:0000269" key="9">
    <source>
    </source>
</evidence>
<evidence type="ECO:0007829" key="10">
    <source>
        <dbReference type="PDB" id="2VUS"/>
    </source>
</evidence>
<evidence type="ECO:0007829" key="11">
    <source>
        <dbReference type="PDB" id="2VUT"/>
    </source>
</evidence>
<evidence type="ECO:0007829" key="12">
    <source>
        <dbReference type="PDB" id="4GAT"/>
    </source>
</evidence>
<feature type="chain" id="PRO_0000083465" description="Nitrogen regulatory protein areA">
    <location>
        <begin position="1"/>
        <end position="876"/>
    </location>
</feature>
<feature type="zinc finger region" description="GATA-type" evidence="2">
    <location>
        <begin position="673"/>
        <end position="697"/>
    </location>
</feature>
<feature type="DNA-binding region" description="H-T-H motif" evidence="1">
    <location>
        <begin position="721"/>
        <end position="742"/>
    </location>
</feature>
<feature type="region of interest" description="Disordered" evidence="3">
    <location>
        <begin position="1"/>
        <end position="65"/>
    </location>
</feature>
<feature type="region of interest" description="Disordered" evidence="3">
    <location>
        <begin position="137"/>
        <end position="159"/>
    </location>
</feature>
<feature type="region of interest" description="Disordered" evidence="3">
    <location>
        <begin position="192"/>
        <end position="248"/>
    </location>
</feature>
<feature type="region of interest" description="Disordered" evidence="3">
    <location>
        <begin position="393"/>
        <end position="413"/>
    </location>
</feature>
<feature type="region of interest" description="Disordered" evidence="3">
    <location>
        <begin position="451"/>
        <end position="498"/>
    </location>
</feature>
<feature type="region of interest" description="Disordered" evidence="3">
    <location>
        <begin position="573"/>
        <end position="672"/>
    </location>
</feature>
<feature type="region of interest" description="Disordered" evidence="3">
    <location>
        <begin position="724"/>
        <end position="856"/>
    </location>
</feature>
<feature type="compositionally biased region" description="Gly residues" evidence="3">
    <location>
        <begin position="1"/>
        <end position="11"/>
    </location>
</feature>
<feature type="compositionally biased region" description="Polar residues" evidence="3">
    <location>
        <begin position="198"/>
        <end position="211"/>
    </location>
</feature>
<feature type="compositionally biased region" description="Polar residues" evidence="3">
    <location>
        <begin position="399"/>
        <end position="408"/>
    </location>
</feature>
<feature type="compositionally biased region" description="Polar residues" evidence="3">
    <location>
        <begin position="455"/>
        <end position="480"/>
    </location>
</feature>
<feature type="compositionally biased region" description="Basic and acidic residues" evidence="3">
    <location>
        <begin position="602"/>
        <end position="611"/>
    </location>
</feature>
<feature type="compositionally biased region" description="Polar residues" evidence="3">
    <location>
        <begin position="615"/>
        <end position="640"/>
    </location>
</feature>
<feature type="compositionally biased region" description="Polar residues" evidence="3">
    <location>
        <begin position="724"/>
        <end position="734"/>
    </location>
</feature>
<feature type="compositionally biased region" description="Polar residues" evidence="3">
    <location>
        <begin position="742"/>
        <end position="766"/>
    </location>
</feature>
<feature type="compositionally biased region" description="Low complexity" evidence="3">
    <location>
        <begin position="782"/>
        <end position="798"/>
    </location>
</feature>
<feature type="compositionally biased region" description="Low complexity" evidence="3">
    <location>
        <begin position="828"/>
        <end position="855"/>
    </location>
</feature>
<feature type="strand" evidence="12">
    <location>
        <begin position="667"/>
        <end position="670"/>
    </location>
</feature>
<feature type="strand" evidence="11">
    <location>
        <begin position="674"/>
        <end position="676"/>
    </location>
</feature>
<feature type="strand" evidence="10">
    <location>
        <begin position="682"/>
        <end position="686"/>
    </location>
</feature>
<feature type="turn" evidence="12">
    <location>
        <begin position="688"/>
        <end position="690"/>
    </location>
</feature>
<feature type="strand" evidence="10">
    <location>
        <begin position="692"/>
        <end position="694"/>
    </location>
</feature>
<feature type="helix" evidence="11">
    <location>
        <begin position="695"/>
        <end position="704"/>
    </location>
</feature>
<feature type="helix" evidence="12">
    <location>
        <begin position="710"/>
        <end position="712"/>
    </location>
</feature>
<reference key="1">
    <citation type="journal article" date="1990" name="EMBO J.">
        <title>The regulatory gene areA mediating nitrogen metabolite repression in Aspergillus nidulans. Mutations affecting specificity of gene activation alter a loop residue of a putative zinc finger.</title>
        <authorList>
            <person name="Kudla B."/>
            <person name="Caddick M.X."/>
            <person name="Langdon T."/>
            <person name="Martinez-Rossi N.M."/>
            <person name="Bennett C.F."/>
            <person name="Sibley S."/>
            <person name="Davies R.W."/>
            <person name="Arst H.N. Jr."/>
        </authorList>
    </citation>
    <scope>NUCLEOTIDE SEQUENCE [GENOMIC DNA]</scope>
    <scope>FUNCTION</scope>
</reference>
<reference key="2">
    <citation type="journal article" date="1995" name="Mol. Microbiol.">
        <title>Mutational analysis reveals dispensability of the N-terminal region of the Aspergillus transcription factor mediating nitrogen metabolite repression.</title>
        <authorList>
            <person name="Langdon T."/>
            <person name="Seerins A."/>
            <person name="Ravagnani A."/>
            <person name="Caddick M.X."/>
            <person name="Arst H.N. Jr."/>
        </authorList>
    </citation>
    <scope>SEQUENCE REVISION</scope>
</reference>
<reference key="3">
    <citation type="journal article" date="2005" name="Nature">
        <title>Sequencing of Aspergillus nidulans and comparative analysis with A. fumigatus and A. oryzae.</title>
        <authorList>
            <person name="Galagan J.E."/>
            <person name="Calvo S.E."/>
            <person name="Cuomo C."/>
            <person name="Ma L.-J."/>
            <person name="Wortman J.R."/>
            <person name="Batzoglou S."/>
            <person name="Lee S.-I."/>
            <person name="Bastuerkmen M."/>
            <person name="Spevak C.C."/>
            <person name="Clutterbuck J."/>
            <person name="Kapitonov V."/>
            <person name="Jurka J."/>
            <person name="Scazzocchio C."/>
            <person name="Farman M.L."/>
            <person name="Butler J."/>
            <person name="Purcell S."/>
            <person name="Harris S."/>
            <person name="Braus G.H."/>
            <person name="Draht O."/>
            <person name="Busch S."/>
            <person name="D'Enfert C."/>
            <person name="Bouchier C."/>
            <person name="Goldman G.H."/>
            <person name="Bell-Pedersen D."/>
            <person name="Griffiths-Jones S."/>
            <person name="Doonan J.H."/>
            <person name="Yu J."/>
            <person name="Vienken K."/>
            <person name="Pain A."/>
            <person name="Freitag M."/>
            <person name="Selker E.U."/>
            <person name="Archer D.B."/>
            <person name="Penalva M.A."/>
            <person name="Oakley B.R."/>
            <person name="Momany M."/>
            <person name="Tanaka T."/>
            <person name="Kumagai T."/>
            <person name="Asai K."/>
            <person name="Machida M."/>
            <person name="Nierman W.C."/>
            <person name="Denning D.W."/>
            <person name="Caddick M.X."/>
            <person name="Hynes M."/>
            <person name="Paoletti M."/>
            <person name="Fischer R."/>
            <person name="Miller B.L."/>
            <person name="Dyer P.S."/>
            <person name="Sachs M.S."/>
            <person name="Osmani S.A."/>
            <person name="Birren B.W."/>
        </authorList>
    </citation>
    <scope>NUCLEOTIDE SEQUENCE [LARGE SCALE GENOMIC DNA]</scope>
    <source>
        <strain>FGSC A4 / ATCC 38163 / CBS 112.46 / NRRL 194 / M139</strain>
    </source>
</reference>
<reference key="4">
    <citation type="journal article" date="2009" name="Fungal Genet. Biol.">
        <title>The 2008 update of the Aspergillus nidulans genome annotation: a community effort.</title>
        <authorList>
            <person name="Wortman J.R."/>
            <person name="Gilsenan J.M."/>
            <person name="Joardar V."/>
            <person name="Deegan J."/>
            <person name="Clutterbuck J."/>
            <person name="Andersen M.R."/>
            <person name="Archer D."/>
            <person name="Bencina M."/>
            <person name="Braus G."/>
            <person name="Coutinho P."/>
            <person name="von Dohren H."/>
            <person name="Doonan J."/>
            <person name="Driessen A.J."/>
            <person name="Durek P."/>
            <person name="Espeso E."/>
            <person name="Fekete E."/>
            <person name="Flipphi M."/>
            <person name="Estrada C.G."/>
            <person name="Geysens S."/>
            <person name="Goldman G."/>
            <person name="de Groot P.W."/>
            <person name="Hansen K."/>
            <person name="Harris S.D."/>
            <person name="Heinekamp T."/>
            <person name="Helmstaedt K."/>
            <person name="Henrissat B."/>
            <person name="Hofmann G."/>
            <person name="Homan T."/>
            <person name="Horio T."/>
            <person name="Horiuchi H."/>
            <person name="James S."/>
            <person name="Jones M."/>
            <person name="Karaffa L."/>
            <person name="Karanyi Z."/>
            <person name="Kato M."/>
            <person name="Keller N."/>
            <person name="Kelly D.E."/>
            <person name="Kiel J.A."/>
            <person name="Kim J.M."/>
            <person name="van der Klei I.J."/>
            <person name="Klis F.M."/>
            <person name="Kovalchuk A."/>
            <person name="Krasevec N."/>
            <person name="Kubicek C.P."/>
            <person name="Liu B."/>
            <person name="Maccabe A."/>
            <person name="Meyer V."/>
            <person name="Mirabito P."/>
            <person name="Miskei M."/>
            <person name="Mos M."/>
            <person name="Mullins J."/>
            <person name="Nelson D.R."/>
            <person name="Nielsen J."/>
            <person name="Oakley B.R."/>
            <person name="Osmani S.A."/>
            <person name="Pakula T."/>
            <person name="Paszewski A."/>
            <person name="Paulsen I."/>
            <person name="Pilsyk S."/>
            <person name="Pocsi I."/>
            <person name="Punt P.J."/>
            <person name="Ram A.F."/>
            <person name="Ren Q."/>
            <person name="Robellet X."/>
            <person name="Robson G."/>
            <person name="Seiboth B."/>
            <person name="van Solingen P."/>
            <person name="Specht T."/>
            <person name="Sun J."/>
            <person name="Taheri-Talesh N."/>
            <person name="Takeshita N."/>
            <person name="Ussery D."/>
            <person name="vanKuyk P.A."/>
            <person name="Visser H."/>
            <person name="van de Vondervoort P.J."/>
            <person name="de Vries R.P."/>
            <person name="Walton J."/>
            <person name="Xiang X."/>
            <person name="Xiong Y."/>
            <person name="Zeng A.P."/>
            <person name="Brandt B.W."/>
            <person name="Cornell M.J."/>
            <person name="van den Hondel C.A."/>
            <person name="Visser J."/>
            <person name="Oliver S.G."/>
            <person name="Turner G."/>
        </authorList>
    </citation>
    <scope>GENOME REANNOTATION</scope>
    <source>
        <strain>FGSC A4 / ATCC 38163 / CBS 112.46 / NRRL 194 / M139</strain>
    </source>
</reference>
<reference key="5">
    <citation type="journal article" date="2003" name="J. Biol. Chem.">
        <title>The negative transcriptional regulator NmrA discriminates between oxidized and reduced dinucleotides.</title>
        <authorList>
            <person name="Lamb H.K."/>
            <person name="Leslie K."/>
            <person name="Dodds A.L."/>
            <person name="Nutley M."/>
            <person name="Cooper A."/>
            <person name="Johnson C."/>
            <person name="Thompson P."/>
            <person name="Stammers D.K."/>
            <person name="Hawkins A.R."/>
        </authorList>
    </citation>
    <scope>INTERACTION WITH NMRA</scope>
</reference>
<reference key="6">
    <citation type="journal article" date="2004" name="Protein Sci.">
        <title>Modulation of the ligand binding properties of the transcription repressor NmrA by GATA-containing DNA and site-directed mutagenesis.</title>
        <authorList>
            <person name="Lamb H.K."/>
            <person name="Ren J."/>
            <person name="Park A."/>
            <person name="Johnson C."/>
            <person name="Leslie K."/>
            <person name="Cocklin S."/>
            <person name="Thompson P."/>
            <person name="Mee C."/>
            <person name="Cooper A."/>
            <person name="Stammers D.K."/>
            <person name="Hawkins A.R."/>
        </authorList>
    </citation>
    <scope>INTERACTION WITH NMRA</scope>
    <scope>DNA-BINDING</scope>
</reference>
<reference key="7">
    <citation type="journal article" date="2007" name="Mol. Microbiol.">
        <title>Transcriptional control of nmrA by the bZIP transcription factor MeaB reveals a new level of nitrogen regulation in Aspergillus nidulans.</title>
        <authorList>
            <person name="Wong K.H."/>
            <person name="Hynes M.J."/>
            <person name="Todd R.B."/>
            <person name="Davis M.A."/>
        </authorList>
    </citation>
    <scope>INDUCTION BY NITROGEN</scope>
</reference>
<reference key="8">
    <citation type="journal article" date="1998" name="J. Mol. Biol.">
        <title>The solution structure of a fungal AREA protein-DNA complex: an alternative binding mode for the basic carboxyl tail of GATA factors.</title>
        <authorList>
            <person name="Starich M.R."/>
            <person name="Wikstroem M."/>
            <person name="Arst H.N. Jr."/>
            <person name="Clore G.M."/>
            <person name="Gronenborn A.M."/>
        </authorList>
    </citation>
    <scope>STRUCTURE BY NMR OF 663-727 IN COMPLEX WITH DNA</scope>
    <scope>DNA-BINDING</scope>
</reference>
<reference key="9">
    <citation type="journal article" date="2008" name="J. Mol. Biol.">
        <title>Structural analysis of the recognition of the negative regulator NmrA and DNA by the zinc finger from the GATA-type transcription factor AreA.</title>
        <authorList>
            <person name="Kotaka M."/>
            <person name="Johnson C."/>
            <person name="Lamb H.K."/>
            <person name="Hawkins A.R."/>
            <person name="Ren J."/>
            <person name="Stammers D.K."/>
        </authorList>
    </citation>
    <scope>X-RAY CRYSTALLOGRAPHY (2.3 ANGSTROMS) OF 670-712 IN COMPLEX WITH NMRA</scope>
</reference>
<organism>
    <name type="scientific">Emericella nidulans (strain FGSC A4 / ATCC 38163 / CBS 112.46 / NRRL 194 / M139)</name>
    <name type="common">Aspergillus nidulans</name>
    <dbReference type="NCBI Taxonomy" id="227321"/>
    <lineage>
        <taxon>Eukaryota</taxon>
        <taxon>Fungi</taxon>
        <taxon>Dikarya</taxon>
        <taxon>Ascomycota</taxon>
        <taxon>Pezizomycotina</taxon>
        <taxon>Eurotiomycetes</taxon>
        <taxon>Eurotiomycetidae</taxon>
        <taxon>Eurotiales</taxon>
        <taxon>Aspergillaceae</taxon>
        <taxon>Aspergillus</taxon>
        <taxon>Aspergillus subgen. Nidulantes</taxon>
    </lineage>
</organism>
<comment type="function">
    <text evidence="8">Transcription activator that binds the consensus DNA element 5'-CGATAG-3' and mediates nitrogen metabolite repression. Activates the transcription of uapA.</text>
</comment>
<comment type="subunit">
    <text evidence="4 5 7 9">Interacts with nmrA.</text>
</comment>
<comment type="subcellular location">
    <subcellularLocation>
        <location>Nucleus</location>
    </subcellularLocation>
</comment>
<comment type="induction">
    <text evidence="6">Down-regulated in nitrogen-sufficient conditions and up-regulated in nitrogen-limiting conditions.</text>
</comment>
<name>AREA_EMENI</name>